<proteinExistence type="predicted"/>
<organism>
    <name type="scientific">Schizosaccharomyces pombe (strain 972 / ATCC 24843)</name>
    <name type="common">Fission yeast</name>
    <dbReference type="NCBI Taxonomy" id="284812"/>
    <lineage>
        <taxon>Eukaryota</taxon>
        <taxon>Fungi</taxon>
        <taxon>Dikarya</taxon>
        <taxon>Ascomycota</taxon>
        <taxon>Taphrinomycotina</taxon>
        <taxon>Schizosaccharomycetes</taxon>
        <taxon>Schizosaccharomycetales</taxon>
        <taxon>Schizosaccharomycetaceae</taxon>
        <taxon>Schizosaccharomyces</taxon>
    </lineage>
</organism>
<protein>
    <recommendedName>
        <fullName>Uncharacterized protein C11C11.06c</fullName>
    </recommendedName>
</protein>
<dbReference type="EMBL" id="CU329671">
    <property type="protein sequence ID" value="CAA20688.1"/>
    <property type="molecule type" value="Genomic_DNA"/>
</dbReference>
<dbReference type="PIR" id="T39321">
    <property type="entry name" value="S67379"/>
</dbReference>
<dbReference type="RefSeq" id="NP_596395.1">
    <property type="nucleotide sequence ID" value="NM_001022316.2"/>
</dbReference>
<dbReference type="BioGRID" id="276522">
    <property type="interactions" value="2"/>
</dbReference>
<dbReference type="STRING" id="284812.Q10195"/>
<dbReference type="iPTMnet" id="Q10195"/>
<dbReference type="PaxDb" id="4896-SPBC11C11.06c.1"/>
<dbReference type="EnsemblFungi" id="SPBC11C11.06c.1">
    <property type="protein sequence ID" value="SPBC11C11.06c.1:pep"/>
    <property type="gene ID" value="SPBC11C11.06c"/>
</dbReference>
<dbReference type="KEGG" id="spo:2539978"/>
<dbReference type="PomBase" id="SPBC11C11.06c"/>
<dbReference type="VEuPathDB" id="FungiDB:SPBC11C11.06c"/>
<dbReference type="HOGENOM" id="CLU_1526035_0_0_1"/>
<dbReference type="InParanoid" id="Q10195"/>
<dbReference type="OMA" id="KSHIPAN"/>
<dbReference type="PRO" id="PR:Q10195"/>
<dbReference type="Proteomes" id="UP000002485">
    <property type="component" value="Chromosome II"/>
</dbReference>
<dbReference type="GO" id="GO:0005829">
    <property type="term" value="C:cytosol"/>
    <property type="evidence" value="ECO:0007005"/>
    <property type="project" value="PomBase"/>
</dbReference>
<dbReference type="GO" id="GO:0005741">
    <property type="term" value="C:mitochondrial outer membrane"/>
    <property type="evidence" value="ECO:0000266"/>
    <property type="project" value="PomBase"/>
</dbReference>
<dbReference type="GO" id="GO:0005739">
    <property type="term" value="C:mitochondrion"/>
    <property type="evidence" value="ECO:0007005"/>
    <property type="project" value="PomBase"/>
</dbReference>
<dbReference type="GO" id="GO:0005634">
    <property type="term" value="C:nucleus"/>
    <property type="evidence" value="ECO:0007005"/>
    <property type="project" value="PomBase"/>
</dbReference>
<dbReference type="GO" id="GO:0006626">
    <property type="term" value="P:protein targeting to mitochondrion"/>
    <property type="evidence" value="ECO:0000266"/>
    <property type="project" value="PomBase"/>
</dbReference>
<feature type="chain" id="PRO_0000116534" description="Uncharacterized protein C11C11.06c">
    <location>
        <begin position="1"/>
        <end position="178"/>
    </location>
</feature>
<feature type="region of interest" description="Disordered" evidence="1">
    <location>
        <begin position="1"/>
        <end position="89"/>
    </location>
</feature>
<feature type="compositionally biased region" description="Basic and acidic residues" evidence="1">
    <location>
        <begin position="44"/>
        <end position="53"/>
    </location>
</feature>
<feature type="compositionally biased region" description="Basic and acidic residues" evidence="1">
    <location>
        <begin position="61"/>
        <end position="89"/>
    </location>
</feature>
<reference key="1">
    <citation type="journal article" date="2002" name="Nature">
        <title>The genome sequence of Schizosaccharomyces pombe.</title>
        <authorList>
            <person name="Wood V."/>
            <person name="Gwilliam R."/>
            <person name="Rajandream M.A."/>
            <person name="Lyne M.H."/>
            <person name="Lyne R."/>
            <person name="Stewart A."/>
            <person name="Sgouros J.G."/>
            <person name="Peat N."/>
            <person name="Hayles J."/>
            <person name="Baker S.G."/>
            <person name="Basham D."/>
            <person name="Bowman S."/>
            <person name="Brooks K."/>
            <person name="Brown D."/>
            <person name="Brown S."/>
            <person name="Chillingworth T."/>
            <person name="Churcher C.M."/>
            <person name="Collins M."/>
            <person name="Connor R."/>
            <person name="Cronin A."/>
            <person name="Davis P."/>
            <person name="Feltwell T."/>
            <person name="Fraser A."/>
            <person name="Gentles S."/>
            <person name="Goble A."/>
            <person name="Hamlin N."/>
            <person name="Harris D.E."/>
            <person name="Hidalgo J."/>
            <person name="Hodgson G."/>
            <person name="Holroyd S."/>
            <person name="Hornsby T."/>
            <person name="Howarth S."/>
            <person name="Huckle E.J."/>
            <person name="Hunt S."/>
            <person name="Jagels K."/>
            <person name="James K.D."/>
            <person name="Jones L."/>
            <person name="Jones M."/>
            <person name="Leather S."/>
            <person name="McDonald S."/>
            <person name="McLean J."/>
            <person name="Mooney P."/>
            <person name="Moule S."/>
            <person name="Mungall K.L."/>
            <person name="Murphy L.D."/>
            <person name="Niblett D."/>
            <person name="Odell C."/>
            <person name="Oliver K."/>
            <person name="O'Neil S."/>
            <person name="Pearson D."/>
            <person name="Quail M.A."/>
            <person name="Rabbinowitsch E."/>
            <person name="Rutherford K.M."/>
            <person name="Rutter S."/>
            <person name="Saunders D."/>
            <person name="Seeger K."/>
            <person name="Sharp S."/>
            <person name="Skelton J."/>
            <person name="Simmonds M.N."/>
            <person name="Squares R."/>
            <person name="Squares S."/>
            <person name="Stevens K."/>
            <person name="Taylor K."/>
            <person name="Taylor R.G."/>
            <person name="Tivey A."/>
            <person name="Walsh S.V."/>
            <person name="Warren T."/>
            <person name="Whitehead S."/>
            <person name="Woodward J.R."/>
            <person name="Volckaert G."/>
            <person name="Aert R."/>
            <person name="Robben J."/>
            <person name="Grymonprez B."/>
            <person name="Weltjens I."/>
            <person name="Vanstreels E."/>
            <person name="Rieger M."/>
            <person name="Schaefer M."/>
            <person name="Mueller-Auer S."/>
            <person name="Gabel C."/>
            <person name="Fuchs M."/>
            <person name="Duesterhoeft A."/>
            <person name="Fritzc C."/>
            <person name="Holzer E."/>
            <person name="Moestl D."/>
            <person name="Hilbert H."/>
            <person name="Borzym K."/>
            <person name="Langer I."/>
            <person name="Beck A."/>
            <person name="Lehrach H."/>
            <person name="Reinhardt R."/>
            <person name="Pohl T.M."/>
            <person name="Eger P."/>
            <person name="Zimmermann W."/>
            <person name="Wedler H."/>
            <person name="Wambutt R."/>
            <person name="Purnelle B."/>
            <person name="Goffeau A."/>
            <person name="Cadieu E."/>
            <person name="Dreano S."/>
            <person name="Gloux S."/>
            <person name="Lelaure V."/>
            <person name="Mottier S."/>
            <person name="Galibert F."/>
            <person name="Aves S.J."/>
            <person name="Xiang Z."/>
            <person name="Hunt C."/>
            <person name="Moore K."/>
            <person name="Hurst S.M."/>
            <person name="Lucas M."/>
            <person name="Rochet M."/>
            <person name="Gaillardin C."/>
            <person name="Tallada V.A."/>
            <person name="Garzon A."/>
            <person name="Thode G."/>
            <person name="Daga R.R."/>
            <person name="Cruzado L."/>
            <person name="Jimenez J."/>
            <person name="Sanchez M."/>
            <person name="del Rey F."/>
            <person name="Benito J."/>
            <person name="Dominguez A."/>
            <person name="Revuelta J.L."/>
            <person name="Moreno S."/>
            <person name="Armstrong J."/>
            <person name="Forsburg S.L."/>
            <person name="Cerutti L."/>
            <person name="Lowe T."/>
            <person name="McCombie W.R."/>
            <person name="Paulsen I."/>
            <person name="Potashkin J."/>
            <person name="Shpakovski G.V."/>
            <person name="Ussery D."/>
            <person name="Barrell B.G."/>
            <person name="Nurse P."/>
        </authorList>
    </citation>
    <scope>NUCLEOTIDE SEQUENCE [LARGE SCALE GENOMIC DNA]</scope>
    <source>
        <strain>972 / ATCC 24843</strain>
    </source>
</reference>
<gene>
    <name type="ORF">SPBC11C11.06c</name>
</gene>
<sequence>MSAKEGSSHPSYAEIVREHAPEQTAAEKAAPQPPEVEEVLSEEPYQKNEKVVVLDEEDADAFLHPEEAEAKKESEKPSDGEKKGKTEKLEKEAKSVYSKACNFVNAHKVPASAAISINLLSLGAISAYLLKSRQSGTLNNRTLCTCTAIAGIVFTISAVFSKTPKTACCASKKSNKST</sequence>
<name>YBY6_SCHPO</name>
<keyword id="KW-1185">Reference proteome</keyword>
<evidence type="ECO:0000256" key="1">
    <source>
        <dbReference type="SAM" id="MobiDB-lite"/>
    </source>
</evidence>
<accession>Q10195</accession>